<gene>
    <name type="primary">GCG</name>
</gene>
<comment type="function">
    <molecule>Glucagon</molecule>
    <text evidence="6">Plays a key role in glucose metabolism and homeostasis. Regulates blood glucose by increasing gluconeogenesis and decreasing glycolysis. A counterregulatory hormone of insulin, raises plasma glucose levels in response to insulin-induced hypoglycemia. Plays an important role in initiating and maintaining hyperglycemic conditions in diabetes.</text>
</comment>
<comment type="function">
    <molecule>Glucagon-like peptide 1</molecule>
    <text evidence="6">Potent stimulator of glucose-dependent insulin release. Also stimulates insulin release in response to IL6. Plays important roles on gastric motility and the suppression of plasma glucagon levels. May be involved in the suppression of satiety and stimulation of glucose disposal in peripheral tissues, independent of the actions of insulin. Has growth-promoting activities on intestinal epithelium. May also regulate the hypothalamic pituitary axis (HPA) via effects on LH, TSH, CRH, oxytocin, and vasopressin secretion. Increases islet mass through stimulation of islet neogenesis and pancreatic beta cell proliferation. Inhibits beta cell apoptosis.</text>
</comment>
<comment type="function">
    <molecule>Glucagon-like peptide 2</molecule>
    <text evidence="6">Stimulates intestinal growth and up-regulates villus height in the small intestine, concomitant with increased crypt cell proliferation and decreased enterocyte apoptosis. The gastrointestinal tract, from the stomach to the colon is the principal target for GLP-2 action. Plays a key role in nutrient homeostasis, enhancing nutrient assimilation through enhanced gastrointestinal function, as well as increasing nutrient disposal. Stimulates intestinal glucose transport and decreases mucosal permeability.</text>
</comment>
<comment type="function">
    <molecule>Oxyntomodulin</molecule>
    <text evidence="6">Significantly reduces food intake. Inhibits gastric emptying in humans. Suppression of gastric emptying may lead to increased gastric distension, which may contribute to satiety by causing a sensation of fullness.</text>
</comment>
<comment type="function">
    <molecule>Glicentin</molecule>
    <text evidence="6">May modulate gastric acid secretion and the gastro-pyloro-duodenal activity. May play an important role in intestinal mucosal growth in the early period of life.</text>
</comment>
<comment type="subcellular location">
    <subcellularLocation>
        <location evidence="2">Secreted</location>
    </subcellularLocation>
</comment>
<comment type="subcellular location">
    <molecule>Glucagon-like peptide 1</molecule>
    <subcellularLocation>
        <location evidence="2">Secreted</location>
    </subcellularLocation>
</comment>
<comment type="tissue specificity">
    <text>Glucagon is secreted in the A cells of the islets of Langerhans. GLP-1, GLP-2, oxyntomodulin and glicentin are secreted from enteroendocrine cells throughout the gastrointestinal tract. GLP-1 and GLP-2 are also secreted in selected neurons in the brain.</text>
</comment>
<comment type="induction">
    <text evidence="1">Glucagon release is stimulated by hypoglycemia and inhibited by hyperglycemia, insulin, and somatostatin. GLP-1 and GLP-2 are induced in response to nutrient ingestion (By similarity).</text>
</comment>
<comment type="PTM">
    <text evidence="1">Proglucagon is post-translationally processed in a tissue-specific manner in pancreatic A cells and intestinal L cells. In pancreatic A cells, the major bioactive hormone is glucagon cleaved by PCSK2/PC2. In the intestinal L cells PCSK1/PC1 liberates GLP-1, GLP-2, glicentin and oxyntomodulin. GLP-1 is further N-terminally truncated by post-translational processing in the intestinal L cells resulting in GLP-1(7-37) GLP-1-(7-36)amide. The C-terminal amidation is neither important for the metabolism of GLP-1 nor for its effects on the endocrine pancreas (By similarity).</text>
</comment>
<comment type="similarity">
    <text evidence="9">Belongs to the glucagon family.</text>
</comment>
<sequence>MKSIYFVAGLFVMLVQGSWQRSLQDTEEKSRSFSAPQTEPLNDLDQMNEDKRHSQGTFTSDYSKYLDSRRAQDFVQWLMNTKRNKNNIAKRHDEFERHAEGTFTSDVSSYLEGQAAKEFIAWLVKGRGRRDFPEEVAIVEEFRRRHADGSFSDEMNTVLDTLATRDFINWLLQTKITDRK</sequence>
<reference key="1">
    <citation type="journal article" date="2001" name="DNA Seq.">
        <title>cDNA cloning of proglucagon from the stomach and pancreas of the dog.</title>
        <authorList>
            <person name="Irwin D.M."/>
        </authorList>
    </citation>
    <scope>NUCLEOTIDE SEQUENCE [MRNA]</scope>
    <source>
        <tissue>Pancreas</tissue>
        <tissue>Stomach</tissue>
    </source>
</reference>
<reference key="2">
    <citation type="journal article" date="1988" name="Regul. Pept.">
        <title>Immunoreactive glucagons purified from dog pancreas, stomach and ileum.</title>
        <authorList>
            <person name="Shinomura Y."/>
            <person name="Eng J."/>
            <person name="Yalow R.S."/>
        </authorList>
    </citation>
    <scope>PROTEIN SEQUENCE OF 21-89</scope>
    <source>
        <tissue>Ileum</tissue>
    </source>
</reference>
<reference key="3">
    <citation type="journal article" date="1999" name="Endocrinology">
        <title>Proglucagon processing profile in canine L cells expressing endogenous prohormone convertase 1/3 and prohormone convertase 2.</title>
        <authorList>
            <person name="Damholt A.B."/>
            <person name="Buchan A.M."/>
            <person name="Holst J.J."/>
            <person name="Kofod H."/>
        </authorList>
    </citation>
    <scope>PROTEOLYTIC PROCESSING BY PCSK1 AND PCSK2</scope>
</reference>
<reference key="4">
    <citation type="journal article" date="2003" name="Mol. Endocrinol.">
        <title>Glucagon-like peptides: regulators of cell proliferation, differentiation, and apoptosis.</title>
        <authorList>
            <person name="Drucker D.J."/>
        </authorList>
    </citation>
    <scope>REVIEW</scope>
</reference>
<reference key="5">
    <citation type="journal article" date="2003" name="Am. J. Physiol.">
        <title>Glucagon and regulation of glucose metabolism.</title>
        <authorList>
            <person name="Jiang G."/>
            <person name="Zhang B.B."/>
        </authorList>
    </citation>
    <scope>REVIEW</scope>
</reference>
<reference key="6">
    <citation type="journal article" date="1999" name="Trends Endocrinol. Metab.">
        <title>Glucagon-like peptide 2.</title>
        <authorList>
            <person name="Drucker D.J."/>
        </authorList>
    </citation>
    <scope>REVIEW</scope>
</reference>
<reference key="7">
    <citation type="journal article" date="1999" name="Endocr. Rev.">
        <title>The glucagon-like peptides.</title>
        <authorList>
            <person name="Kieffer T.J."/>
            <person name="Habener J.F."/>
        </authorList>
    </citation>
    <scope>REVIEW</scope>
</reference>
<protein>
    <recommendedName>
        <fullName>Pro-glucagon</fullName>
    </recommendedName>
    <component>
        <recommendedName>
            <fullName>Glicentin</fullName>
        </recommendedName>
    </component>
    <component>
        <recommendedName>
            <fullName>Glicentin-related polypeptide</fullName>
            <shortName>GRPP</shortName>
        </recommendedName>
    </component>
    <component>
        <recommendedName>
            <fullName>Oxyntomodulin</fullName>
            <shortName>OXM</shortName>
            <shortName>OXY</shortName>
        </recommendedName>
    </component>
    <component>
        <recommendedName>
            <fullName>Glucagon</fullName>
        </recommendedName>
    </component>
    <component>
        <recommendedName>
            <fullName>Glucagon-like peptide 1</fullName>
            <shortName>GLP-1</shortName>
        </recommendedName>
    </component>
    <component>
        <recommendedName>
            <fullName>Glucagon-like peptide 1(7-37)</fullName>
            <shortName>GLP-1(7-37)</shortName>
        </recommendedName>
    </component>
    <component>
        <recommendedName>
            <fullName>Glucagon-like peptide 1(7-36)</fullName>
            <shortName>GLP-1(7-36)</shortName>
        </recommendedName>
    </component>
    <component>
        <recommendedName>
            <fullName>Glucagon-like peptide 2</fullName>
            <shortName>GLP-2</shortName>
        </recommendedName>
    </component>
</protein>
<organism>
    <name type="scientific">Canis lupus familiaris</name>
    <name type="common">Dog</name>
    <name type="synonym">Canis familiaris</name>
    <dbReference type="NCBI Taxonomy" id="9615"/>
    <lineage>
        <taxon>Eukaryota</taxon>
        <taxon>Metazoa</taxon>
        <taxon>Chordata</taxon>
        <taxon>Craniata</taxon>
        <taxon>Vertebrata</taxon>
        <taxon>Euteleostomi</taxon>
        <taxon>Mammalia</taxon>
        <taxon>Eutheria</taxon>
        <taxon>Laurasiatheria</taxon>
        <taxon>Carnivora</taxon>
        <taxon>Caniformia</taxon>
        <taxon>Canidae</taxon>
        <taxon>Canis</taxon>
    </lineage>
</organism>
<feature type="signal peptide" evidence="8">
    <location>
        <begin position="1"/>
        <end position="20"/>
    </location>
</feature>
<feature type="peptide" id="PRO_0000011233" description="Glicentin" evidence="8">
    <location>
        <begin position="21"/>
        <end position="89"/>
    </location>
</feature>
<feature type="peptide" id="PRO_0000011234" description="Glicentin-related polypeptide" evidence="4">
    <location>
        <begin position="21"/>
        <end position="50"/>
    </location>
</feature>
<feature type="peptide" id="PRO_0000011235" description="Oxyntomodulin" evidence="3">
    <location>
        <begin position="53"/>
        <end position="89"/>
    </location>
</feature>
<feature type="peptide" id="PRO_0000011236" description="Glucagon" evidence="2">
    <location>
        <begin position="53"/>
        <end position="81"/>
    </location>
</feature>
<feature type="propeptide" id="PRO_0000011237" evidence="2">
    <location>
        <begin position="84"/>
        <end position="89"/>
    </location>
</feature>
<feature type="peptide" id="PRO_0000011238" description="Glucagon-like peptide 1" evidence="2">
    <location>
        <begin position="92"/>
        <end position="128"/>
    </location>
</feature>
<feature type="peptide" id="PRO_0000011239" description="Glucagon-like peptide 1(7-37)" evidence="2">
    <location>
        <begin position="98"/>
        <end position="128"/>
    </location>
</feature>
<feature type="peptide" id="PRO_0000011240" description="Glucagon-like peptide 1(7-36)" evidence="2">
    <location>
        <begin position="98"/>
        <end position="127"/>
    </location>
</feature>
<feature type="propeptide" id="PRO_0000011241" evidence="5">
    <location>
        <begin position="131"/>
        <end position="145"/>
    </location>
</feature>
<feature type="peptide" id="PRO_0000011242" description="Glucagon-like peptide 2" evidence="5">
    <location>
        <begin position="146"/>
        <end position="178"/>
    </location>
</feature>
<feature type="region of interest" description="Disordered" evidence="7">
    <location>
        <begin position="26"/>
        <end position="56"/>
    </location>
</feature>
<feature type="site" description="Cleavage; by PCSK2">
    <location>
        <begin position="52"/>
        <end position="53"/>
    </location>
</feature>
<feature type="site" description="Cleavage; by PCSK1 and PCSK2">
    <location>
        <begin position="83"/>
        <end position="84"/>
    </location>
</feature>
<feature type="site" description="Cleavage; by PCSK1">
    <location>
        <begin position="91"/>
        <end position="92"/>
    </location>
</feature>
<feature type="site" description="Cleavage; by PCSK1">
    <location>
        <begin position="97"/>
        <end position="98"/>
    </location>
</feature>
<feature type="site" description="Cleavage; by PCSK1">
    <location>
        <begin position="130"/>
        <end position="131"/>
    </location>
</feature>
<feature type="site" description="Cleavage; by PCSK1">
    <location>
        <begin position="145"/>
        <end position="146"/>
    </location>
</feature>
<feature type="modified residue" description="Phosphoserine" evidence="6">
    <location>
        <position position="54"/>
    </location>
</feature>
<feature type="modified residue" description="Phosphoserine" evidence="6">
    <location>
        <position position="105"/>
    </location>
</feature>
<feature type="modified residue" description="Phosphoserine" evidence="6">
    <location>
        <position position="108"/>
    </location>
</feature>
<feature type="modified residue" description="Arginine amide" evidence="1">
    <location>
        <position position="127"/>
    </location>
</feature>
<feature type="modified residue" description="Phosphoserine" evidence="6">
    <location>
        <position position="150"/>
    </location>
</feature>
<feature type="modified residue" description="Phosphoserine" evidence="6">
    <location>
        <position position="152"/>
    </location>
</feature>
<keyword id="KW-0027">Amidation</keyword>
<keyword id="KW-0165">Cleavage on pair of basic residues</keyword>
<keyword id="KW-0903">Direct protein sequencing</keyword>
<keyword id="KW-0372">Hormone</keyword>
<keyword id="KW-0597">Phosphoprotein</keyword>
<keyword id="KW-1185">Reference proteome</keyword>
<keyword id="KW-0964">Secreted</keyword>
<keyword id="KW-0732">Signal</keyword>
<proteinExistence type="evidence at protein level"/>
<evidence type="ECO:0000250" key="1"/>
<evidence type="ECO:0000250" key="2">
    <source>
        <dbReference type="UniProtKB" id="P01275"/>
    </source>
</evidence>
<evidence type="ECO:0000250" key="3">
    <source>
        <dbReference type="UniProtKB" id="P06883"/>
    </source>
</evidence>
<evidence type="ECO:0000250" key="4">
    <source>
        <dbReference type="UniProtKB" id="P09686"/>
    </source>
</evidence>
<evidence type="ECO:0000250" key="5">
    <source>
        <dbReference type="UniProtKB" id="P15438"/>
    </source>
</evidence>
<evidence type="ECO:0000250" key="6">
    <source>
        <dbReference type="UniProtKB" id="P55095"/>
    </source>
</evidence>
<evidence type="ECO:0000256" key="7">
    <source>
        <dbReference type="SAM" id="MobiDB-lite"/>
    </source>
</evidence>
<evidence type="ECO:0000269" key="8">
    <source>
    </source>
</evidence>
<evidence type="ECO:0000305" key="9"/>
<dbReference type="EMBL" id="AF308439">
    <property type="protein sequence ID" value="AAL09425.1"/>
    <property type="molecule type" value="mRNA"/>
</dbReference>
<dbReference type="PIR" id="A60318">
    <property type="entry name" value="GCDG69"/>
</dbReference>
<dbReference type="RefSeq" id="NP_001003044.1">
    <property type="nucleotide sequence ID" value="NM_001003044.1"/>
</dbReference>
<dbReference type="SMR" id="P29794"/>
<dbReference type="FunCoup" id="P29794">
    <property type="interactions" value="80"/>
</dbReference>
<dbReference type="STRING" id="9615.ENSCAFP00000015307"/>
<dbReference type="PaxDb" id="9612-ENSCAFP00000015307"/>
<dbReference type="GeneID" id="403571"/>
<dbReference type="KEGG" id="cfa:403571"/>
<dbReference type="CTD" id="2641"/>
<dbReference type="eggNOG" id="ENOG502RYPR">
    <property type="taxonomic scope" value="Eukaryota"/>
</dbReference>
<dbReference type="InParanoid" id="P29794"/>
<dbReference type="OrthoDB" id="9904258at2759"/>
<dbReference type="Proteomes" id="UP000002254">
    <property type="component" value="Unplaced"/>
</dbReference>
<dbReference type="Proteomes" id="UP000694429">
    <property type="component" value="Unplaced"/>
</dbReference>
<dbReference type="Proteomes" id="UP000694542">
    <property type="component" value="Unplaced"/>
</dbReference>
<dbReference type="Proteomes" id="UP000805418">
    <property type="component" value="Unplaced"/>
</dbReference>
<dbReference type="GO" id="GO:0005615">
    <property type="term" value="C:extracellular space"/>
    <property type="evidence" value="ECO:0000250"/>
    <property type="project" value="UniProtKB"/>
</dbReference>
<dbReference type="GO" id="GO:0031769">
    <property type="term" value="F:glucagon receptor binding"/>
    <property type="evidence" value="ECO:0000318"/>
    <property type="project" value="GO_Central"/>
</dbReference>
<dbReference type="GO" id="GO:0005179">
    <property type="term" value="F:hormone activity"/>
    <property type="evidence" value="ECO:0000318"/>
    <property type="project" value="GO_Central"/>
</dbReference>
<dbReference type="GO" id="GO:0007188">
    <property type="term" value="P:adenylate cyclase-modulating G protein-coupled receptor signaling pathway"/>
    <property type="evidence" value="ECO:0000318"/>
    <property type="project" value="GO_Central"/>
</dbReference>
<dbReference type="GO" id="GO:0042593">
    <property type="term" value="P:glucose homeostasis"/>
    <property type="evidence" value="ECO:0000250"/>
    <property type="project" value="UniProtKB"/>
</dbReference>
<dbReference type="GO" id="GO:0043066">
    <property type="term" value="P:negative regulation of apoptotic process"/>
    <property type="evidence" value="ECO:0000318"/>
    <property type="project" value="GO_Central"/>
</dbReference>
<dbReference type="GO" id="GO:0035774">
    <property type="term" value="P:positive regulation of insulin secretion involved in cellular response to glucose stimulus"/>
    <property type="evidence" value="ECO:0000318"/>
    <property type="project" value="GO_Central"/>
</dbReference>
<dbReference type="GO" id="GO:0010737">
    <property type="term" value="P:protein kinase A signaling"/>
    <property type="evidence" value="ECO:0000318"/>
    <property type="project" value="GO_Central"/>
</dbReference>
<dbReference type="GO" id="GO:0050796">
    <property type="term" value="P:regulation of insulin secretion"/>
    <property type="evidence" value="ECO:0000250"/>
    <property type="project" value="UniProtKB"/>
</dbReference>
<dbReference type="GO" id="GO:0014823">
    <property type="term" value="P:response to activity"/>
    <property type="evidence" value="ECO:0000250"/>
    <property type="project" value="UniProtKB"/>
</dbReference>
<dbReference type="Gene3D" id="6.10.250.590">
    <property type="match status" value="3"/>
</dbReference>
<dbReference type="InterPro" id="IPR015550">
    <property type="entry name" value="Glucagon"/>
</dbReference>
<dbReference type="InterPro" id="IPR000532">
    <property type="entry name" value="Glucagon_GIP_secretin_VIP"/>
</dbReference>
<dbReference type="PANTHER" id="PTHR11418">
    <property type="entry name" value="GLUCAGON"/>
    <property type="match status" value="1"/>
</dbReference>
<dbReference type="PANTHER" id="PTHR11418:SF0">
    <property type="entry name" value="PRO-GLUCAGON"/>
    <property type="match status" value="1"/>
</dbReference>
<dbReference type="Pfam" id="PF00123">
    <property type="entry name" value="Hormone_2"/>
    <property type="match status" value="3"/>
</dbReference>
<dbReference type="PRINTS" id="PR00275">
    <property type="entry name" value="GLUCAGON"/>
</dbReference>
<dbReference type="SMART" id="SM00070">
    <property type="entry name" value="GLUCA"/>
    <property type="match status" value="3"/>
</dbReference>
<dbReference type="PROSITE" id="PS00260">
    <property type="entry name" value="GLUCAGON"/>
    <property type="match status" value="4"/>
</dbReference>
<name>GLUC_CANLF</name>
<accession>P29794</accession>
<accession>Q95LG0</accession>